<evidence type="ECO:0000250" key="1"/>
<evidence type="ECO:0000255" key="2"/>
<evidence type="ECO:0000255" key="3">
    <source>
        <dbReference type="PROSITE-ProRule" id="PRU00793"/>
    </source>
</evidence>
<evidence type="ECO:0000256" key="4">
    <source>
        <dbReference type="SAM" id="MobiDB-lite"/>
    </source>
</evidence>
<dbReference type="EMBL" id="AY957499">
    <property type="protein sequence ID" value="AAY34705.1"/>
    <property type="molecule type" value="Genomic_DNA"/>
</dbReference>
<dbReference type="RefSeq" id="NP_001039664.1">
    <property type="nucleotide sequence ID" value="NM_001046199.1"/>
</dbReference>
<dbReference type="SMR" id="Q32S24"/>
<dbReference type="ComplexPortal" id="CPX-3108">
    <property type="entry name" value="Collagen type XI trimer variant 1"/>
</dbReference>
<dbReference type="FunCoup" id="Q32S24">
    <property type="interactions" value="164"/>
</dbReference>
<dbReference type="IntAct" id="Q32S24">
    <property type="interactions" value="1"/>
</dbReference>
<dbReference type="STRING" id="9913.ENSBTAP00000000793"/>
<dbReference type="GlyCosmos" id="Q32S24">
    <property type="glycosylation" value="2 sites, No reported glycans"/>
</dbReference>
<dbReference type="GlyGen" id="Q32S24">
    <property type="glycosylation" value="2 sites"/>
</dbReference>
<dbReference type="PaxDb" id="9913-ENSBTAP00000000793"/>
<dbReference type="GeneID" id="515435"/>
<dbReference type="KEGG" id="bta:515435"/>
<dbReference type="CTD" id="1302"/>
<dbReference type="eggNOG" id="KOG3544">
    <property type="taxonomic scope" value="Eukaryota"/>
</dbReference>
<dbReference type="InParanoid" id="Q32S24"/>
<dbReference type="OrthoDB" id="8939548at2759"/>
<dbReference type="Proteomes" id="UP000009136">
    <property type="component" value="Unplaced"/>
</dbReference>
<dbReference type="GO" id="GO:0005581">
    <property type="term" value="C:collagen trimer"/>
    <property type="evidence" value="ECO:0000318"/>
    <property type="project" value="GO_Central"/>
</dbReference>
<dbReference type="GO" id="GO:0005592">
    <property type="term" value="C:collagen type XI trimer"/>
    <property type="evidence" value="ECO:0000303"/>
    <property type="project" value="ComplexPortal"/>
</dbReference>
<dbReference type="GO" id="GO:0062023">
    <property type="term" value="C:collagen-containing extracellular matrix"/>
    <property type="evidence" value="ECO:0000318"/>
    <property type="project" value="GO_Central"/>
</dbReference>
<dbReference type="GO" id="GO:0005576">
    <property type="term" value="C:extracellular region"/>
    <property type="evidence" value="ECO:0000304"/>
    <property type="project" value="Reactome"/>
</dbReference>
<dbReference type="GO" id="GO:0005615">
    <property type="term" value="C:extracellular space"/>
    <property type="evidence" value="ECO:0000318"/>
    <property type="project" value="GO_Central"/>
</dbReference>
<dbReference type="GO" id="GO:0030020">
    <property type="term" value="F:extracellular matrix structural constituent conferring tensile strength"/>
    <property type="evidence" value="ECO:0000318"/>
    <property type="project" value="GO_Central"/>
</dbReference>
<dbReference type="GO" id="GO:0046872">
    <property type="term" value="F:metal ion binding"/>
    <property type="evidence" value="ECO:0007669"/>
    <property type="project" value="UniProtKB-KW"/>
</dbReference>
<dbReference type="GO" id="GO:0051216">
    <property type="term" value="P:cartilage development"/>
    <property type="evidence" value="ECO:0000318"/>
    <property type="project" value="GO_Central"/>
</dbReference>
<dbReference type="GO" id="GO:0030199">
    <property type="term" value="P:collagen fibril organization"/>
    <property type="evidence" value="ECO:0000318"/>
    <property type="project" value="GO_Central"/>
</dbReference>
<dbReference type="GO" id="GO:0007605">
    <property type="term" value="P:sensory perception of sound"/>
    <property type="evidence" value="ECO:0000318"/>
    <property type="project" value="GO_Central"/>
</dbReference>
<dbReference type="CDD" id="cd00110">
    <property type="entry name" value="LamG"/>
    <property type="match status" value="1"/>
</dbReference>
<dbReference type="FunFam" id="2.60.120.1000:FF:000004">
    <property type="entry name" value="collagen alpha-2(XI) chain isoform X1"/>
    <property type="match status" value="1"/>
</dbReference>
<dbReference type="FunFam" id="2.60.120.200:FF:000049">
    <property type="entry name" value="collagen alpha-2(XI) chain isoform X2"/>
    <property type="match status" value="1"/>
</dbReference>
<dbReference type="Gene3D" id="2.60.120.1000">
    <property type="match status" value="1"/>
</dbReference>
<dbReference type="Gene3D" id="2.60.120.200">
    <property type="match status" value="1"/>
</dbReference>
<dbReference type="InterPro" id="IPR008160">
    <property type="entry name" value="Collagen"/>
</dbReference>
<dbReference type="InterPro" id="IPR050149">
    <property type="entry name" value="Collagen_superfamily"/>
</dbReference>
<dbReference type="InterPro" id="IPR013320">
    <property type="entry name" value="ConA-like_dom_sf"/>
</dbReference>
<dbReference type="InterPro" id="IPR000885">
    <property type="entry name" value="Fib_collagen_C"/>
</dbReference>
<dbReference type="InterPro" id="IPR001791">
    <property type="entry name" value="Laminin_G"/>
</dbReference>
<dbReference type="InterPro" id="IPR048287">
    <property type="entry name" value="TSPN-like_N"/>
</dbReference>
<dbReference type="PANTHER" id="PTHR24023">
    <property type="entry name" value="COLLAGEN ALPHA"/>
    <property type="match status" value="1"/>
</dbReference>
<dbReference type="PANTHER" id="PTHR24023:SF1082">
    <property type="entry name" value="COLLAGEN TRIPLE HELIX REPEAT"/>
    <property type="match status" value="1"/>
</dbReference>
<dbReference type="Pfam" id="PF01410">
    <property type="entry name" value="COLFI"/>
    <property type="match status" value="2"/>
</dbReference>
<dbReference type="Pfam" id="PF01391">
    <property type="entry name" value="Collagen"/>
    <property type="match status" value="5"/>
</dbReference>
<dbReference type="Pfam" id="PF02210">
    <property type="entry name" value="Laminin_G_2"/>
    <property type="match status" value="1"/>
</dbReference>
<dbReference type="SMART" id="SM00038">
    <property type="entry name" value="COLFI"/>
    <property type="match status" value="1"/>
</dbReference>
<dbReference type="SMART" id="SM00282">
    <property type="entry name" value="LamG"/>
    <property type="match status" value="1"/>
</dbReference>
<dbReference type="SMART" id="SM00210">
    <property type="entry name" value="TSPN"/>
    <property type="match status" value="1"/>
</dbReference>
<dbReference type="SUPFAM" id="SSF49899">
    <property type="entry name" value="Concanavalin A-like lectins/glucanases"/>
    <property type="match status" value="1"/>
</dbReference>
<dbReference type="PROSITE" id="PS51461">
    <property type="entry name" value="NC1_FIB"/>
    <property type="match status" value="1"/>
</dbReference>
<reference key="1">
    <citation type="journal article" date="2006" name="Anim. Genet.">
        <title>Comparative analysis of the bovine MHC class IIb sequence identifies inversion breakpoints and three unexpected genes.</title>
        <authorList>
            <person name="Childers C.P."/>
            <person name="Newkirk H.L."/>
            <person name="Honeycutt D.A."/>
            <person name="Ramlachan N."/>
            <person name="Muzney D.M."/>
            <person name="Sodergren E."/>
            <person name="Gibbs R.A."/>
            <person name="Weinstock G.M."/>
            <person name="Womack J.E."/>
            <person name="Skow L.C."/>
        </authorList>
    </citation>
    <scope>NUCLEOTIDE SEQUENCE [LARGE SCALE GENOMIC DNA]</scope>
</reference>
<gene>
    <name type="primary">COL11A2</name>
</gene>
<comment type="function">
    <text evidence="1">May play an important role in fibrillogenesis by controlling lateral growth of collagen II fibrils.</text>
</comment>
<comment type="subunit">
    <text evidence="1">Trimers composed of three different chains: alpha 1(XI), alpha 2(XI), and alpha 3(XI). Alpha 3(XI) is a post-translational modification of alpha 1(II). Alpha 1(V) can also be found instead of alpha 3(XI)=1(II) (By similarity).</text>
</comment>
<comment type="subcellular location">
    <subcellularLocation>
        <location evidence="3">Secreted</location>
        <location evidence="3">Extracellular space</location>
        <location evidence="3">Extracellular matrix</location>
    </subcellularLocation>
</comment>
<comment type="domain">
    <text evidence="1">The C-terminal propeptide, also known as COLFI domain, have crucial roles in tissue growth and repair by controlling both the intracellular assembly of procollagen molecules and the extracellular assembly of collagen fibrils. It binds a calcium ion which is essential for its function (By similarity).</text>
</comment>
<comment type="PTM">
    <text>Prolines at the third position of the tripeptide repeating unit (G-X-Y) are hydroxylated in some or all of the chains.</text>
</comment>
<comment type="similarity">
    <text evidence="3">Belongs to the fibrillar collagen family.</text>
</comment>
<accession>Q32S24</accession>
<keyword id="KW-0106">Calcium</keyword>
<keyword id="KW-0176">Collagen</keyword>
<keyword id="KW-1015">Disulfide bond</keyword>
<keyword id="KW-0272">Extracellular matrix</keyword>
<keyword id="KW-0325">Glycoprotein</keyword>
<keyword id="KW-0379">Hydroxylation</keyword>
<keyword id="KW-0479">Metal-binding</keyword>
<keyword id="KW-1185">Reference proteome</keyword>
<keyword id="KW-0677">Repeat</keyword>
<keyword id="KW-0964">Secreted</keyword>
<keyword id="KW-0732">Signal</keyword>
<feature type="signal peptide" evidence="2">
    <location>
        <begin position="1"/>
        <end position="27"/>
    </location>
</feature>
<feature type="chain" id="PRO_0000239863" description="Collagen alpha-2(XI) chain">
    <location>
        <begin position="28"/>
        <end position="1736"/>
    </location>
</feature>
<feature type="propeptide" id="PRO_0000239864" description="C-terminal propeptide">
    <location>
        <begin position="1501"/>
        <end position="1736"/>
    </location>
</feature>
<feature type="domain" description="Laminin G-like">
    <location>
        <begin position="57"/>
        <end position="228"/>
    </location>
</feature>
<feature type="domain" description="Collagen-like 1">
    <location>
        <begin position="399"/>
        <end position="447"/>
    </location>
</feature>
<feature type="domain" description="Collagen-like 2">
    <location>
        <begin position="487"/>
        <end position="545"/>
    </location>
</feature>
<feature type="domain" description="Collagen-like 3">
    <location>
        <begin position="546"/>
        <end position="587"/>
    </location>
</feature>
<feature type="domain" description="Collagen-like 4">
    <location>
        <begin position="1072"/>
        <end position="1127"/>
    </location>
</feature>
<feature type="domain" description="Collagen-like 5">
    <location>
        <begin position="1128"/>
        <end position="1172"/>
    </location>
</feature>
<feature type="domain" description="Collagen-like 6">
    <location>
        <begin position="1444"/>
        <end position="1499"/>
    </location>
</feature>
<feature type="domain" description="Fibrillar collagen NC1" evidence="3">
    <location>
        <begin position="1541"/>
        <end position="1735"/>
    </location>
</feature>
<feature type="region of interest" description="Nonhelical region">
    <location>
        <begin position="215"/>
        <end position="486"/>
    </location>
</feature>
<feature type="region of interest" description="Disordered" evidence="4">
    <location>
        <begin position="229"/>
        <end position="465"/>
    </location>
</feature>
<feature type="region of interest" description="Disordered" evidence="4">
    <location>
        <begin position="485"/>
        <end position="1539"/>
    </location>
</feature>
<feature type="region of interest" description="Triple-helical region">
    <location>
        <begin position="487"/>
        <end position="1500"/>
    </location>
</feature>
<feature type="compositionally biased region" description="Polar residues" evidence="4">
    <location>
        <begin position="258"/>
        <end position="270"/>
    </location>
</feature>
<feature type="compositionally biased region" description="Low complexity" evidence="4">
    <location>
        <begin position="363"/>
        <end position="376"/>
    </location>
</feature>
<feature type="compositionally biased region" description="Pro residues" evidence="4">
    <location>
        <begin position="400"/>
        <end position="413"/>
    </location>
</feature>
<feature type="compositionally biased region" description="Low complexity" evidence="4">
    <location>
        <begin position="515"/>
        <end position="533"/>
    </location>
</feature>
<feature type="compositionally biased region" description="Pro residues" evidence="4">
    <location>
        <begin position="615"/>
        <end position="624"/>
    </location>
</feature>
<feature type="compositionally biased region" description="Low complexity" evidence="4">
    <location>
        <begin position="650"/>
        <end position="663"/>
    </location>
</feature>
<feature type="compositionally biased region" description="Basic and acidic residues" evidence="4">
    <location>
        <begin position="765"/>
        <end position="774"/>
    </location>
</feature>
<feature type="compositionally biased region" description="Low complexity" evidence="4">
    <location>
        <begin position="842"/>
        <end position="861"/>
    </location>
</feature>
<feature type="compositionally biased region" description="Gly residues" evidence="4">
    <location>
        <begin position="994"/>
        <end position="1003"/>
    </location>
</feature>
<feature type="compositionally biased region" description="Pro residues" evidence="4">
    <location>
        <begin position="1029"/>
        <end position="1040"/>
    </location>
</feature>
<feature type="compositionally biased region" description="Low complexity" evidence="4">
    <location>
        <begin position="1115"/>
        <end position="1133"/>
    </location>
</feature>
<feature type="compositionally biased region" description="Pro residues" evidence="4">
    <location>
        <begin position="1176"/>
        <end position="1187"/>
    </location>
</feature>
<feature type="compositionally biased region" description="Low complexity" evidence="4">
    <location>
        <begin position="1217"/>
        <end position="1230"/>
    </location>
</feature>
<feature type="compositionally biased region" description="Basic and acidic residues" evidence="4">
    <location>
        <begin position="1232"/>
        <end position="1241"/>
    </location>
</feature>
<feature type="compositionally biased region" description="Basic and acidic residues" evidence="4">
    <location>
        <begin position="1287"/>
        <end position="1296"/>
    </location>
</feature>
<feature type="compositionally biased region" description="Low complexity" evidence="4">
    <location>
        <begin position="1341"/>
        <end position="1364"/>
    </location>
</feature>
<feature type="compositionally biased region" description="Low complexity" evidence="4">
    <location>
        <begin position="1376"/>
        <end position="1386"/>
    </location>
</feature>
<feature type="compositionally biased region" description="Pro residues" evidence="4">
    <location>
        <begin position="1388"/>
        <end position="1397"/>
    </location>
</feature>
<feature type="compositionally biased region" description="Low complexity" evidence="4">
    <location>
        <begin position="1413"/>
        <end position="1422"/>
    </location>
</feature>
<feature type="compositionally biased region" description="Pro residues" evidence="4">
    <location>
        <begin position="1457"/>
        <end position="1467"/>
    </location>
</feature>
<feature type="compositionally biased region" description="Low complexity" evidence="4">
    <location>
        <begin position="1469"/>
        <end position="1481"/>
    </location>
</feature>
<feature type="binding site" evidence="1">
    <location>
        <position position="1589"/>
    </location>
    <ligand>
        <name>Ca(2+)</name>
        <dbReference type="ChEBI" id="CHEBI:29108"/>
    </ligand>
</feature>
<feature type="binding site" evidence="1">
    <location>
        <position position="1591"/>
    </location>
    <ligand>
        <name>Ca(2+)</name>
        <dbReference type="ChEBI" id="CHEBI:29108"/>
    </ligand>
</feature>
<feature type="binding site" evidence="1">
    <location>
        <position position="1592"/>
    </location>
    <ligand>
        <name>Ca(2+)</name>
        <dbReference type="ChEBI" id="CHEBI:29108"/>
    </ligand>
</feature>
<feature type="binding site" evidence="1">
    <location>
        <position position="1594"/>
    </location>
    <ligand>
        <name>Ca(2+)</name>
        <dbReference type="ChEBI" id="CHEBI:29108"/>
    </ligand>
</feature>
<feature type="binding site" evidence="1">
    <location>
        <position position="1597"/>
    </location>
    <ligand>
        <name>Ca(2+)</name>
        <dbReference type="ChEBI" id="CHEBI:29108"/>
    </ligand>
</feature>
<feature type="glycosylation site" description="N-linked (GlcNAc...) asparagine" evidence="2">
    <location>
        <position position="1604"/>
    </location>
</feature>
<feature type="glycosylation site" description="N-linked (GlcNAc...) asparagine" evidence="2">
    <location>
        <position position="1650"/>
    </location>
</feature>
<feature type="disulfide bond" evidence="3">
    <location>
        <begin position="1571"/>
        <end position="1603"/>
    </location>
</feature>
<feature type="disulfide bond" description="Interchain" evidence="3">
    <location>
        <position position="1577"/>
    </location>
</feature>
<feature type="disulfide bond" description="Interchain" evidence="3">
    <location>
        <position position="1594"/>
    </location>
</feature>
<feature type="disulfide bond" evidence="3">
    <location>
        <begin position="1612"/>
        <end position="1733"/>
    </location>
</feature>
<feature type="disulfide bond" evidence="3">
    <location>
        <begin position="1655"/>
        <end position="1689"/>
    </location>
</feature>
<proteinExistence type="inferred from homology"/>
<name>COBA2_BOVIN</name>
<protein>
    <recommendedName>
        <fullName>Collagen alpha-2(XI) chain</fullName>
    </recommendedName>
</protein>
<organism>
    <name type="scientific">Bos taurus</name>
    <name type="common">Bovine</name>
    <dbReference type="NCBI Taxonomy" id="9913"/>
    <lineage>
        <taxon>Eukaryota</taxon>
        <taxon>Metazoa</taxon>
        <taxon>Chordata</taxon>
        <taxon>Craniata</taxon>
        <taxon>Vertebrata</taxon>
        <taxon>Euteleostomi</taxon>
        <taxon>Mammalia</taxon>
        <taxon>Eutheria</taxon>
        <taxon>Laurasiatheria</taxon>
        <taxon>Artiodactyla</taxon>
        <taxon>Ruminantia</taxon>
        <taxon>Pecora</taxon>
        <taxon>Bovidae</taxon>
        <taxon>Bovinae</taxon>
        <taxon>Bos</taxon>
    </lineage>
</organism>
<sequence length="1736" mass="172238">MERCSRCHHLLLLVLLLLWLSAAPAWAGTAPVDVLRALRFPALPDGVRRARGICPADVAYRVSRPAQLSAPTRQLFPGGFPKDFSLLTAVRARPGLQAPLLTLYSAQGVRQLGLELGRPVRFLYEDQTGRPQPPAQPVFRGLSLADGKWHRVAVAVKGQSVTLIIDCKKRVTRPLPRSARPVLDTRGVIIFGARILDEEVFEGDIQELSIIPGVQAAYESCDQKELECEGGWRERPQRQPSHRTQRSPKQQPPRLHRPQNQEPQAQSTESLYYDYEPPYYDVMTTGTTPDYQDPTPGEEEGILESSPLPPPEEEQTDLQVPPTADRFLTEEYGEGGTEPPAGPYDYTYAYGDDYHEETELGPALSAETARSEAAARGPRGLKGEKGEPAVLEPGMLVEGPPGPEGPAGFPGPPGIQGNPGPVGDPGERGPPGRAGLPGSDGAPGPPGTSLMLPFRFGSGGGDKGPVVAAQEAQAQAILQQARVALRGPPGPMGYTGRPGPLGQPGSPGMKGESGDLGPQGPRGPQGLMGPPGKAGRRGRAGADGARGMPGEPGVKGDRGFDGLPGLPGEKGHRGDTGAQGLPGPPGEDGERGDDGEIGPRGLPGESGPRGLLGPKGPPGIPGPPGVRGMDGPHGPKGSLGPQGEPGPPGQQGTPGTQGLPGPQGAIGPHGEKGPRGKPGLPGMPGSDGPPGHPGKEGPPGTKGNQGPSGPQGPLGYPGPRGIKGVDGIRGLKGHKGEKGEDGFPGFKGDMGVKGDRGEVGVPGSRGEDGPEGPKGRTGPTGDPGPPGLMGEKGKLGVPGLPGYPGRQGPKGSLGFPGFPGASGEKGARGLSGKSGPRGERGPTGPRGQRGPRGATGKSGAKGTSGGDGPHGPPGERGLPGPQGPNGFPGPKGPPGPPGKDGLPGHPGQRGEVGFQGKTGPPGPPGVVGPQGAAGETGPMGERGHPGPPGPPGEQGLTGTAGKEGTKGDPGPPGAPGKDGPAGLRGFPGERGLPGTAGGPGLKGNEGPAGPPGPAGSPGERGSAGSGGPIGPPGRPGPQGPPGAAGEKGVPGEKGPIGPTGRDGVQGPVGLPGPAGPPGVAGEDGDKGEVGDPGQKGAKGNKGEHGPPGPPGPIGPVGQPGAAGADGEPGARGPQGHFGAKGDEGTRGFNGPPGPIGLQGLPGPSGEKGETGDVGPMGPPGPPGPRGPAGPNGADGPQGPPGGVGNLGPPGEKGEPGESGSPGVQGEPGVKGPRGERGEKGETGQAGEAGPPGPKGPTGDDGPKGNPGPVGFPGDPGPPGEVGPRGQDGAKGDRGEDGEPGQPGSPGPTGENGPPGPLGKRGPAGTPGPEGRQGEKGAKGDPGAVGAPGKTGPVGPAGPAGKPGPDGLRGLPGSVGQQGRPGATGQAGPPGPVGPPGLPGLRGDTGAKGEKGHPGLIGLIGPPGEQGEKGDRGLPGPQGSTGQKGETGIPGASGPIGPGGPPGLPGPAGPKGAKGATGPAGPKGEKGVQGPPGHPGPPGEVIQPLPIQMPKKTRRSVDGSRLMQEDEAVPTGGAPGSPGGLEEIFGSLDSLREEIEQMRRPMGTQDSPARTCQDLKLCHPELPDGEYWVDPNQGCARDAFRVFCNFTAGGETCVTPRDDVTQFSYVDSEGAPVGVVQLTFLRLLSVSARQNISYPCSGEAQDSPLKLRGANEDELSPETSPYIKEIRDGCQTQQGRTVLEVRTPVLEQLPVLDASFSELGAPPRRGGVLLGPVCFMG</sequence>